<evidence type="ECO:0000255" key="1">
    <source>
        <dbReference type="PROSITE-ProRule" id="PRU00705"/>
    </source>
</evidence>
<evidence type="ECO:0000269" key="2">
    <source>
    </source>
</evidence>
<evidence type="ECO:0000305" key="3"/>
<evidence type="ECO:0007829" key="4">
    <source>
        <dbReference type="PDB" id="1ISU"/>
    </source>
</evidence>
<feature type="chain" id="PRO_0000220428" description="High-potential iron-sulfur protein">
    <location>
        <begin position="1"/>
        <end position="62"/>
    </location>
</feature>
<feature type="binding site" evidence="2">
    <location>
        <position position="22"/>
    </location>
    <ligand>
        <name>[4Fe-4S] cluster</name>
        <dbReference type="ChEBI" id="CHEBI:49883"/>
    </ligand>
</feature>
<feature type="binding site" evidence="2">
    <location>
        <position position="25"/>
    </location>
    <ligand>
        <name>[4Fe-4S] cluster</name>
        <dbReference type="ChEBI" id="CHEBI:49883"/>
    </ligand>
</feature>
<feature type="binding site" evidence="2">
    <location>
        <position position="40"/>
    </location>
    <ligand>
        <name>[4Fe-4S] cluster</name>
        <dbReference type="ChEBI" id="CHEBI:49883"/>
    </ligand>
</feature>
<feature type="binding site" evidence="2">
    <location>
        <position position="55"/>
    </location>
    <ligand>
        <name>[4Fe-4S] cluster</name>
        <dbReference type="ChEBI" id="CHEBI:49883"/>
    </ligand>
</feature>
<feature type="sequence conflict" description="In Ref. 1; AA sequence." evidence="3" ref="1">
    <location>
        <position position="30"/>
    </location>
</feature>
<feature type="sequence conflict" description="In Ref. 1; AA sequence." evidence="3" ref="1">
    <original>P</original>
    <variation>A</variation>
    <location>
        <position position="34"/>
    </location>
</feature>
<feature type="helix" evidence="4">
    <location>
        <begin position="4"/>
        <end position="9"/>
    </location>
</feature>
<feature type="strand" evidence="4">
    <location>
        <begin position="13"/>
        <end position="15"/>
    </location>
</feature>
<feature type="helix" evidence="4">
    <location>
        <begin position="22"/>
        <end position="24"/>
    </location>
</feature>
<feature type="strand" evidence="4">
    <location>
        <begin position="38"/>
        <end position="40"/>
    </location>
</feature>
<reference key="1">
    <citation type="journal article" date="1985" name="Arch. Biochem. Biophys.">
        <title>The amino acid sequence of a high-redox-potential ferredoxin from the purple phototrophic bacterium, Rhodospirillum tenue strain 2761.</title>
        <authorList>
            <person name="Tedro S.M."/>
            <person name="Meyer T.E."/>
            <person name="Kamen M.D."/>
        </authorList>
    </citation>
    <scope>PROTEIN SEQUENCE</scope>
    <source>
        <strain>ATCC 25093 / DSM 109 / 2761</strain>
    </source>
</reference>
<reference key="2">
    <citation type="journal article" date="1992" name="J. Mol. Biol.">
        <title>Three-dimensional structure of the high-potential iron-sulfur protein isolated from the purple phototrophic bacterium Rhodocyclus tenuis determined and refined at 1.5-A resolution.</title>
        <authorList>
            <person name="Rayment I."/>
            <person name="Wesenberg G."/>
            <person name="Meyer T.E."/>
            <person name="Cusanovich M.A."/>
            <person name="Holden H.M."/>
        </authorList>
    </citation>
    <scope>X-RAY CRYSTALLOGRAPHY (1.5 ANGSTROMS) IN COMPLEX WITH IRON-SULFUR (4FE-4S)</scope>
    <scope>SEQUENCE REVISION</scope>
    <source>
        <strain>ATCC 25093 / DSM 109 / 2761</strain>
    </source>
</reference>
<accession>P33678</accession>
<protein>
    <recommendedName>
        <fullName>High-potential iron-sulfur protein</fullName>
        <shortName>HiPIP</shortName>
    </recommendedName>
</protein>
<name>HIP2_RHOTE</name>
<sequence length="62" mass="6296">GTNAAMRKAFNYQDTAKNGKKCSGCAQFVPGASPTAAGGCKVIPGDNQIAPGGYCDAFIVKK</sequence>
<keyword id="KW-0002">3D-structure</keyword>
<keyword id="KW-0004">4Fe-4S</keyword>
<keyword id="KW-0903">Direct protein sequencing</keyword>
<keyword id="KW-0249">Electron transport</keyword>
<keyword id="KW-0408">Iron</keyword>
<keyword id="KW-0411">Iron-sulfur</keyword>
<keyword id="KW-0479">Metal-binding</keyword>
<keyword id="KW-0813">Transport</keyword>
<organism>
    <name type="scientific">Rhodocyclus tenuis</name>
    <name type="common">Rhodospirillum tenue</name>
    <dbReference type="NCBI Taxonomy" id="1066"/>
    <lineage>
        <taxon>Bacteria</taxon>
        <taxon>Pseudomonadati</taxon>
        <taxon>Pseudomonadota</taxon>
        <taxon>Betaproteobacteria</taxon>
        <taxon>Rhodocyclales</taxon>
        <taxon>Rhodocyclaceae</taxon>
        <taxon>Rhodocyclus</taxon>
    </lineage>
</organism>
<comment type="function">
    <text>Specific class of high-redox-potential 4Fe-4S ferredoxins. Functions in anaerobic electron transport in most purple and in some other photosynthetic bacteria and in at least one genus (Paracoccus) of halophilic, denitrifying bacteria.</text>
</comment>
<comment type="biophysicochemical properties">
    <redoxPotential>
        <text>E(0) is +330 mV.</text>
    </redoxPotential>
</comment>
<comment type="subunit">
    <text evidence="3">Homodimer.</text>
</comment>
<comment type="similarity">
    <text evidence="1">Belongs to the high-potential iron-sulfur protein (HiPIP) family.</text>
</comment>
<proteinExistence type="evidence at protein level"/>
<gene>
    <name type="primary">hip</name>
</gene>
<dbReference type="PIR" id="A55789">
    <property type="entry name" value="A55789"/>
</dbReference>
<dbReference type="PDB" id="1ISU">
    <property type="method" value="X-ray"/>
    <property type="resolution" value="1.50 A"/>
    <property type="chains" value="A/B=1-62"/>
</dbReference>
<dbReference type="PDBsum" id="1ISU"/>
<dbReference type="SMR" id="P33678"/>
<dbReference type="EvolutionaryTrace" id="P33678"/>
<dbReference type="GO" id="GO:0051539">
    <property type="term" value="F:4 iron, 4 sulfur cluster binding"/>
    <property type="evidence" value="ECO:0007669"/>
    <property type="project" value="UniProtKB-KW"/>
</dbReference>
<dbReference type="GO" id="GO:0009055">
    <property type="term" value="F:electron transfer activity"/>
    <property type="evidence" value="ECO:0007669"/>
    <property type="project" value="InterPro"/>
</dbReference>
<dbReference type="GO" id="GO:0046872">
    <property type="term" value="F:metal ion binding"/>
    <property type="evidence" value="ECO:0007669"/>
    <property type="project" value="UniProtKB-KW"/>
</dbReference>
<dbReference type="GO" id="GO:0019646">
    <property type="term" value="P:aerobic electron transport chain"/>
    <property type="evidence" value="ECO:0007669"/>
    <property type="project" value="InterPro"/>
</dbReference>
<dbReference type="Gene3D" id="4.10.490.10">
    <property type="entry name" value="High potential iron-sulphur protein"/>
    <property type="match status" value="1"/>
</dbReference>
<dbReference type="InterPro" id="IPR000170">
    <property type="entry name" value="High_potential_FeS_prot"/>
</dbReference>
<dbReference type="InterPro" id="IPR036369">
    <property type="entry name" value="HIPIP_sf"/>
</dbReference>
<dbReference type="Pfam" id="PF01355">
    <property type="entry name" value="HIPIP"/>
    <property type="match status" value="1"/>
</dbReference>
<dbReference type="SUPFAM" id="SSF57652">
    <property type="entry name" value="HIPIP (high potential iron protein)"/>
    <property type="match status" value="1"/>
</dbReference>
<dbReference type="PROSITE" id="PS51373">
    <property type="entry name" value="HIPIP"/>
    <property type="match status" value="1"/>
</dbReference>